<gene>
    <name evidence="1" type="primary">rplT</name>
    <name type="ordered locus">BC_4573</name>
</gene>
<accession>Q817H7</accession>
<protein>
    <recommendedName>
        <fullName evidence="1">Large ribosomal subunit protein bL20</fullName>
    </recommendedName>
    <alternativeName>
        <fullName evidence="2">50S ribosomal protein L20</fullName>
    </alternativeName>
</protein>
<dbReference type="EMBL" id="AE016877">
    <property type="protein sequence ID" value="AAP11480.1"/>
    <property type="molecule type" value="Genomic_DNA"/>
</dbReference>
<dbReference type="RefSeq" id="NP_834279.1">
    <property type="nucleotide sequence ID" value="NC_004722.1"/>
</dbReference>
<dbReference type="RefSeq" id="WP_001138362.1">
    <property type="nucleotide sequence ID" value="NZ_CP138336.1"/>
</dbReference>
<dbReference type="SMR" id="Q817H7"/>
<dbReference type="STRING" id="226900.BC_4573"/>
<dbReference type="MetOSite" id="Q817H7"/>
<dbReference type="GeneID" id="93006537"/>
<dbReference type="KEGG" id="bce:BC4573"/>
<dbReference type="PATRIC" id="fig|226900.8.peg.4733"/>
<dbReference type="HOGENOM" id="CLU_123265_0_1_9"/>
<dbReference type="OrthoDB" id="9808966at2"/>
<dbReference type="PRO" id="PR:Q817H7"/>
<dbReference type="Proteomes" id="UP000001417">
    <property type="component" value="Chromosome"/>
</dbReference>
<dbReference type="GO" id="GO:0022625">
    <property type="term" value="C:cytosolic large ribosomal subunit"/>
    <property type="evidence" value="ECO:0000318"/>
    <property type="project" value="GO_Central"/>
</dbReference>
<dbReference type="GO" id="GO:0019843">
    <property type="term" value="F:rRNA binding"/>
    <property type="evidence" value="ECO:0007669"/>
    <property type="project" value="UniProtKB-UniRule"/>
</dbReference>
<dbReference type="GO" id="GO:0003735">
    <property type="term" value="F:structural constituent of ribosome"/>
    <property type="evidence" value="ECO:0000318"/>
    <property type="project" value="GO_Central"/>
</dbReference>
<dbReference type="GO" id="GO:0000027">
    <property type="term" value="P:ribosomal large subunit assembly"/>
    <property type="evidence" value="ECO:0007669"/>
    <property type="project" value="UniProtKB-UniRule"/>
</dbReference>
<dbReference type="GO" id="GO:0006412">
    <property type="term" value="P:translation"/>
    <property type="evidence" value="ECO:0007669"/>
    <property type="project" value="InterPro"/>
</dbReference>
<dbReference type="CDD" id="cd07026">
    <property type="entry name" value="Ribosomal_L20"/>
    <property type="match status" value="1"/>
</dbReference>
<dbReference type="FunFam" id="1.10.1900.20:FF:000001">
    <property type="entry name" value="50S ribosomal protein L20"/>
    <property type="match status" value="1"/>
</dbReference>
<dbReference type="Gene3D" id="6.10.160.10">
    <property type="match status" value="1"/>
</dbReference>
<dbReference type="Gene3D" id="1.10.1900.20">
    <property type="entry name" value="Ribosomal protein L20"/>
    <property type="match status" value="1"/>
</dbReference>
<dbReference type="HAMAP" id="MF_00382">
    <property type="entry name" value="Ribosomal_bL20"/>
    <property type="match status" value="1"/>
</dbReference>
<dbReference type="InterPro" id="IPR005813">
    <property type="entry name" value="Ribosomal_bL20"/>
</dbReference>
<dbReference type="InterPro" id="IPR049946">
    <property type="entry name" value="RIBOSOMAL_L20_CS"/>
</dbReference>
<dbReference type="InterPro" id="IPR035566">
    <property type="entry name" value="Ribosomal_protein_bL20_C"/>
</dbReference>
<dbReference type="NCBIfam" id="TIGR01032">
    <property type="entry name" value="rplT_bact"/>
    <property type="match status" value="1"/>
</dbReference>
<dbReference type="PANTHER" id="PTHR10986">
    <property type="entry name" value="39S RIBOSOMAL PROTEIN L20"/>
    <property type="match status" value="1"/>
</dbReference>
<dbReference type="Pfam" id="PF00453">
    <property type="entry name" value="Ribosomal_L20"/>
    <property type="match status" value="1"/>
</dbReference>
<dbReference type="PRINTS" id="PR00062">
    <property type="entry name" value="RIBOSOMALL20"/>
</dbReference>
<dbReference type="SUPFAM" id="SSF74731">
    <property type="entry name" value="Ribosomal protein L20"/>
    <property type="match status" value="1"/>
</dbReference>
<dbReference type="PROSITE" id="PS00937">
    <property type="entry name" value="RIBOSOMAL_L20"/>
    <property type="match status" value="1"/>
</dbReference>
<evidence type="ECO:0000255" key="1">
    <source>
        <dbReference type="HAMAP-Rule" id="MF_00382"/>
    </source>
</evidence>
<evidence type="ECO:0000305" key="2"/>
<proteinExistence type="inferred from homology"/>
<organism>
    <name type="scientific">Bacillus cereus (strain ATCC 14579 / DSM 31 / CCUG 7414 / JCM 2152 / NBRC 15305 / NCIMB 9373 / NCTC 2599 / NRRL B-3711)</name>
    <dbReference type="NCBI Taxonomy" id="226900"/>
    <lineage>
        <taxon>Bacteria</taxon>
        <taxon>Bacillati</taxon>
        <taxon>Bacillota</taxon>
        <taxon>Bacilli</taxon>
        <taxon>Bacillales</taxon>
        <taxon>Bacillaceae</taxon>
        <taxon>Bacillus</taxon>
        <taxon>Bacillus cereus group</taxon>
    </lineage>
</organism>
<comment type="function">
    <text evidence="1">Binds directly to 23S ribosomal RNA and is necessary for the in vitro assembly process of the 50S ribosomal subunit. It is not involved in the protein synthesizing functions of that subunit.</text>
</comment>
<comment type="similarity">
    <text evidence="1">Belongs to the bacterial ribosomal protein bL20 family.</text>
</comment>
<feature type="chain" id="PRO_0000177113" description="Large ribosomal subunit protein bL20">
    <location>
        <begin position="1"/>
        <end position="118"/>
    </location>
</feature>
<sequence>MPRVKGGTVTRQRRKKVIKLAKGYYGSKNTLFKVANQQVMKSLMYAFRDRRQKKRDFRKLWITRINAAARMNGLSYSRLMHGLKNAGIEVNRKMLADLAVHDEKAFAELATVAKNNIN</sequence>
<reference key="1">
    <citation type="journal article" date="2003" name="Nature">
        <title>Genome sequence of Bacillus cereus and comparative analysis with Bacillus anthracis.</title>
        <authorList>
            <person name="Ivanova N."/>
            <person name="Sorokin A."/>
            <person name="Anderson I."/>
            <person name="Galleron N."/>
            <person name="Candelon B."/>
            <person name="Kapatral V."/>
            <person name="Bhattacharyya A."/>
            <person name="Reznik G."/>
            <person name="Mikhailova N."/>
            <person name="Lapidus A."/>
            <person name="Chu L."/>
            <person name="Mazur M."/>
            <person name="Goltsman E."/>
            <person name="Larsen N."/>
            <person name="D'Souza M."/>
            <person name="Walunas T."/>
            <person name="Grechkin Y."/>
            <person name="Pusch G."/>
            <person name="Haselkorn R."/>
            <person name="Fonstein M."/>
            <person name="Ehrlich S.D."/>
            <person name="Overbeek R."/>
            <person name="Kyrpides N.C."/>
        </authorList>
    </citation>
    <scope>NUCLEOTIDE SEQUENCE [LARGE SCALE GENOMIC DNA]</scope>
    <source>
        <strain>ATCC 14579 / DSM 31 / CCUG 7414 / JCM 2152 / NBRC 15305 / NCIMB 9373 / NCTC 2599 / NRRL B-3711</strain>
    </source>
</reference>
<keyword id="KW-1185">Reference proteome</keyword>
<keyword id="KW-0687">Ribonucleoprotein</keyword>
<keyword id="KW-0689">Ribosomal protein</keyword>
<keyword id="KW-0694">RNA-binding</keyword>
<keyword id="KW-0699">rRNA-binding</keyword>
<name>RL20_BACCR</name>